<accession>Q8UA73</accession>
<comment type="function">
    <text evidence="1">Part of the ABC transporter complex CysAWTP involved in sulfate/thiosulfate import. Responsible for energy coupling to the transport system.</text>
</comment>
<comment type="catalytic activity">
    <reaction evidence="1">
        <text>sulfate(out) + ATP + H2O = sulfate(in) + ADP + phosphate + H(+)</text>
        <dbReference type="Rhea" id="RHEA:10192"/>
        <dbReference type="ChEBI" id="CHEBI:15377"/>
        <dbReference type="ChEBI" id="CHEBI:15378"/>
        <dbReference type="ChEBI" id="CHEBI:16189"/>
        <dbReference type="ChEBI" id="CHEBI:30616"/>
        <dbReference type="ChEBI" id="CHEBI:43474"/>
        <dbReference type="ChEBI" id="CHEBI:456216"/>
        <dbReference type="EC" id="7.3.2.3"/>
    </reaction>
</comment>
<comment type="catalytic activity">
    <reaction evidence="1">
        <text>thiosulfate(out) + ATP + H2O = thiosulfate(in) + ADP + phosphate + H(+)</text>
        <dbReference type="Rhea" id="RHEA:29871"/>
        <dbReference type="ChEBI" id="CHEBI:15377"/>
        <dbReference type="ChEBI" id="CHEBI:15378"/>
        <dbReference type="ChEBI" id="CHEBI:30616"/>
        <dbReference type="ChEBI" id="CHEBI:33542"/>
        <dbReference type="ChEBI" id="CHEBI:43474"/>
        <dbReference type="ChEBI" id="CHEBI:456216"/>
        <dbReference type="EC" id="7.3.2.3"/>
    </reaction>
</comment>
<comment type="subunit">
    <text evidence="1">The complex is composed of two ATP-binding proteins (CysA), two transmembrane proteins (CysT and CysW) and a solute-binding protein (CysP).</text>
</comment>
<comment type="subcellular location">
    <subcellularLocation>
        <location evidence="1">Cell inner membrane</location>
        <topology evidence="1">Peripheral membrane protein</topology>
    </subcellularLocation>
</comment>
<comment type="similarity">
    <text evidence="1">Belongs to the ABC transporter superfamily. Sulfate/tungstate importer (TC 3.A.1.6) family.</text>
</comment>
<reference key="1">
    <citation type="journal article" date="2001" name="Science">
        <title>The genome of the natural genetic engineer Agrobacterium tumefaciens C58.</title>
        <authorList>
            <person name="Wood D.W."/>
            <person name="Setubal J.C."/>
            <person name="Kaul R."/>
            <person name="Monks D.E."/>
            <person name="Kitajima J.P."/>
            <person name="Okura V.K."/>
            <person name="Zhou Y."/>
            <person name="Chen L."/>
            <person name="Wood G.E."/>
            <person name="Almeida N.F. Jr."/>
            <person name="Woo L."/>
            <person name="Chen Y."/>
            <person name="Paulsen I.T."/>
            <person name="Eisen J.A."/>
            <person name="Karp P.D."/>
            <person name="Bovee D. Sr."/>
            <person name="Chapman P."/>
            <person name="Clendenning J."/>
            <person name="Deatherage G."/>
            <person name="Gillet W."/>
            <person name="Grant C."/>
            <person name="Kutyavin T."/>
            <person name="Levy R."/>
            <person name="Li M.-J."/>
            <person name="McClelland E."/>
            <person name="Palmieri A."/>
            <person name="Raymond C."/>
            <person name="Rouse G."/>
            <person name="Saenphimmachak C."/>
            <person name="Wu Z."/>
            <person name="Romero P."/>
            <person name="Gordon D."/>
            <person name="Zhang S."/>
            <person name="Yoo H."/>
            <person name="Tao Y."/>
            <person name="Biddle P."/>
            <person name="Jung M."/>
            <person name="Krespan W."/>
            <person name="Perry M."/>
            <person name="Gordon-Kamm B."/>
            <person name="Liao L."/>
            <person name="Kim S."/>
            <person name="Hendrick C."/>
            <person name="Zhao Z.-Y."/>
            <person name="Dolan M."/>
            <person name="Chumley F."/>
            <person name="Tingey S.V."/>
            <person name="Tomb J.-F."/>
            <person name="Gordon M.P."/>
            <person name="Olson M.V."/>
            <person name="Nester E.W."/>
        </authorList>
    </citation>
    <scope>NUCLEOTIDE SEQUENCE [LARGE SCALE GENOMIC DNA]</scope>
    <source>
        <strain>C58 / ATCC 33970</strain>
    </source>
</reference>
<reference key="2">
    <citation type="journal article" date="2001" name="Science">
        <title>Genome sequence of the plant pathogen and biotechnology agent Agrobacterium tumefaciens C58.</title>
        <authorList>
            <person name="Goodner B."/>
            <person name="Hinkle G."/>
            <person name="Gattung S."/>
            <person name="Miller N."/>
            <person name="Blanchard M."/>
            <person name="Qurollo B."/>
            <person name="Goldman B.S."/>
            <person name="Cao Y."/>
            <person name="Askenazi M."/>
            <person name="Halling C."/>
            <person name="Mullin L."/>
            <person name="Houmiel K."/>
            <person name="Gordon J."/>
            <person name="Vaudin M."/>
            <person name="Iartchouk O."/>
            <person name="Epp A."/>
            <person name="Liu F."/>
            <person name="Wollam C."/>
            <person name="Allinger M."/>
            <person name="Doughty D."/>
            <person name="Scott C."/>
            <person name="Lappas C."/>
            <person name="Markelz B."/>
            <person name="Flanagan C."/>
            <person name="Crowell C."/>
            <person name="Gurson J."/>
            <person name="Lomo C."/>
            <person name="Sear C."/>
            <person name="Strub G."/>
            <person name="Cielo C."/>
            <person name="Slater S."/>
        </authorList>
    </citation>
    <scope>NUCLEOTIDE SEQUENCE [LARGE SCALE GENOMIC DNA]</scope>
    <source>
        <strain>C58 / ATCC 33970</strain>
    </source>
</reference>
<evidence type="ECO:0000255" key="1">
    <source>
        <dbReference type="HAMAP-Rule" id="MF_01701"/>
    </source>
</evidence>
<organism>
    <name type="scientific">Agrobacterium fabrum (strain C58 / ATCC 33970)</name>
    <name type="common">Agrobacterium tumefaciens (strain C58)</name>
    <dbReference type="NCBI Taxonomy" id="176299"/>
    <lineage>
        <taxon>Bacteria</taxon>
        <taxon>Pseudomonadati</taxon>
        <taxon>Pseudomonadota</taxon>
        <taxon>Alphaproteobacteria</taxon>
        <taxon>Hyphomicrobiales</taxon>
        <taxon>Rhizobiaceae</taxon>
        <taxon>Rhizobium/Agrobacterium group</taxon>
        <taxon>Agrobacterium</taxon>
        <taxon>Agrobacterium tumefaciens complex</taxon>
    </lineage>
</organism>
<protein>
    <recommendedName>
        <fullName evidence="1">Sulfate/thiosulfate import ATP-binding protein CysA 2</fullName>
        <ecNumber evidence="1">7.3.2.3</ecNumber>
    </recommendedName>
    <alternativeName>
        <fullName evidence="1">Sulfate-transporting ATPase 2</fullName>
    </alternativeName>
</protein>
<gene>
    <name evidence="1" type="primary">cysA2</name>
    <name type="ordered locus">Atu3501</name>
    <name type="ORF">AGR_L_2655</name>
</gene>
<dbReference type="EC" id="7.3.2.3" evidence="1"/>
<dbReference type="EMBL" id="AE007870">
    <property type="protein sequence ID" value="AAK89894.1"/>
    <property type="molecule type" value="Genomic_DNA"/>
</dbReference>
<dbReference type="PIR" id="AD2987">
    <property type="entry name" value="AD2987"/>
</dbReference>
<dbReference type="PIR" id="D98296">
    <property type="entry name" value="D98296"/>
</dbReference>
<dbReference type="RefSeq" id="NP_357109.1">
    <property type="nucleotide sequence ID" value="NC_003063.2"/>
</dbReference>
<dbReference type="RefSeq" id="WP_010973093.1">
    <property type="nucleotide sequence ID" value="NC_003063.2"/>
</dbReference>
<dbReference type="SMR" id="Q8UA73"/>
<dbReference type="STRING" id="176299.Atu3501"/>
<dbReference type="EnsemblBacteria" id="AAK89894">
    <property type="protein sequence ID" value="AAK89894"/>
    <property type="gene ID" value="Atu3501"/>
</dbReference>
<dbReference type="GeneID" id="1135375"/>
<dbReference type="KEGG" id="atu:Atu3501"/>
<dbReference type="PATRIC" id="fig|176299.10.peg.3340"/>
<dbReference type="eggNOG" id="COG1118">
    <property type="taxonomic scope" value="Bacteria"/>
</dbReference>
<dbReference type="HOGENOM" id="CLU_000604_1_1_5"/>
<dbReference type="OrthoDB" id="9802264at2"/>
<dbReference type="PhylomeDB" id="Q8UA73"/>
<dbReference type="BioCyc" id="AGRO:ATU3501-MONOMER"/>
<dbReference type="Proteomes" id="UP000000813">
    <property type="component" value="Chromosome linear"/>
</dbReference>
<dbReference type="GO" id="GO:0043190">
    <property type="term" value="C:ATP-binding cassette (ABC) transporter complex"/>
    <property type="evidence" value="ECO:0007669"/>
    <property type="project" value="InterPro"/>
</dbReference>
<dbReference type="GO" id="GO:0015419">
    <property type="term" value="F:ABC-type sulfate transporter activity"/>
    <property type="evidence" value="ECO:0007669"/>
    <property type="project" value="InterPro"/>
</dbReference>
<dbReference type="GO" id="GO:0102025">
    <property type="term" value="F:ABC-type thiosulfate transporter activity"/>
    <property type="evidence" value="ECO:0007669"/>
    <property type="project" value="RHEA"/>
</dbReference>
<dbReference type="GO" id="GO:0005524">
    <property type="term" value="F:ATP binding"/>
    <property type="evidence" value="ECO:0007669"/>
    <property type="project" value="UniProtKB-KW"/>
</dbReference>
<dbReference type="GO" id="GO:0016887">
    <property type="term" value="F:ATP hydrolysis activity"/>
    <property type="evidence" value="ECO:0007669"/>
    <property type="project" value="InterPro"/>
</dbReference>
<dbReference type="FunFam" id="3.40.50.300:FF:000425">
    <property type="entry name" value="Probable ABC transporter, ATP-binding subunit"/>
    <property type="match status" value="1"/>
</dbReference>
<dbReference type="Gene3D" id="3.40.50.300">
    <property type="entry name" value="P-loop containing nucleotide triphosphate hydrolases"/>
    <property type="match status" value="1"/>
</dbReference>
<dbReference type="InterPro" id="IPR003593">
    <property type="entry name" value="AAA+_ATPase"/>
</dbReference>
<dbReference type="InterPro" id="IPR050093">
    <property type="entry name" value="ABC_SmlMolc_Importer"/>
</dbReference>
<dbReference type="InterPro" id="IPR003439">
    <property type="entry name" value="ABC_transporter-like_ATP-bd"/>
</dbReference>
<dbReference type="InterPro" id="IPR017871">
    <property type="entry name" value="ABC_transporter-like_CS"/>
</dbReference>
<dbReference type="InterPro" id="IPR008995">
    <property type="entry name" value="Mo/tungstate-bd_C_term_dom"/>
</dbReference>
<dbReference type="InterPro" id="IPR027417">
    <property type="entry name" value="P-loop_NTPase"/>
</dbReference>
<dbReference type="InterPro" id="IPR005666">
    <property type="entry name" value="Sulph_transpt1"/>
</dbReference>
<dbReference type="NCBIfam" id="TIGR00968">
    <property type="entry name" value="3a0106s01"/>
    <property type="match status" value="1"/>
</dbReference>
<dbReference type="PANTHER" id="PTHR42781">
    <property type="entry name" value="SPERMIDINE/PUTRESCINE IMPORT ATP-BINDING PROTEIN POTA"/>
    <property type="match status" value="1"/>
</dbReference>
<dbReference type="PANTHER" id="PTHR42781:SF4">
    <property type="entry name" value="SPERMIDINE_PUTRESCINE IMPORT ATP-BINDING PROTEIN POTA"/>
    <property type="match status" value="1"/>
</dbReference>
<dbReference type="Pfam" id="PF00005">
    <property type="entry name" value="ABC_tran"/>
    <property type="match status" value="1"/>
</dbReference>
<dbReference type="SMART" id="SM00382">
    <property type="entry name" value="AAA"/>
    <property type="match status" value="1"/>
</dbReference>
<dbReference type="SUPFAM" id="SSF50331">
    <property type="entry name" value="MOP-like"/>
    <property type="match status" value="1"/>
</dbReference>
<dbReference type="SUPFAM" id="SSF52540">
    <property type="entry name" value="P-loop containing nucleoside triphosphate hydrolases"/>
    <property type="match status" value="1"/>
</dbReference>
<dbReference type="PROSITE" id="PS00211">
    <property type="entry name" value="ABC_TRANSPORTER_1"/>
    <property type="match status" value="1"/>
</dbReference>
<dbReference type="PROSITE" id="PS50893">
    <property type="entry name" value="ABC_TRANSPORTER_2"/>
    <property type="match status" value="1"/>
</dbReference>
<dbReference type="PROSITE" id="PS51237">
    <property type="entry name" value="CYSA"/>
    <property type="match status" value="1"/>
</dbReference>
<proteinExistence type="inferred from homology"/>
<keyword id="KW-0067">ATP-binding</keyword>
<keyword id="KW-0997">Cell inner membrane</keyword>
<keyword id="KW-1003">Cell membrane</keyword>
<keyword id="KW-0472">Membrane</keyword>
<keyword id="KW-0547">Nucleotide-binding</keyword>
<keyword id="KW-1185">Reference proteome</keyword>
<keyword id="KW-0764">Sulfate transport</keyword>
<keyword id="KW-1278">Translocase</keyword>
<keyword id="KW-0813">Transport</keyword>
<name>CYSA2_AGRFC</name>
<feature type="chain" id="PRO_0000092247" description="Sulfate/thiosulfate import ATP-binding protein CysA 2">
    <location>
        <begin position="1"/>
        <end position="341"/>
    </location>
</feature>
<feature type="domain" description="ABC transporter" evidence="1">
    <location>
        <begin position="3"/>
        <end position="235"/>
    </location>
</feature>
<feature type="binding site" evidence="1">
    <location>
        <begin position="35"/>
        <end position="42"/>
    </location>
    <ligand>
        <name>ATP</name>
        <dbReference type="ChEBI" id="CHEBI:30616"/>
    </ligand>
</feature>
<sequence length="341" mass="37532">MKIRLENVVKTFDTFRAVRDVSLDIESGELLALLGPSGSGKTTILRMVAGLEYSDGGRIFFGDEDATNIPVRDRGVGFVFQHYALFPHMTLHENIAFGMKVSKVKRDKAAIDARVKELLNLVKLDGLGDRFPAQISGGQRQRVALARALSVDPKVLLLDEPFGALDANVRRDLRRWLREIHDSLGITTIFVTHDQEEALDLADRVVILNQGGIVQQGTPKEVCRQPNSSFVMRFLGDANRVSGVARGGKVYVGENELPFSYTQGDGAVDIYARPGDLEWEDLHEGIPASVERVLDRAGERRVIASTDGGDILEFDVPPENDVTAGDRGSVIIRRAKIFPVA</sequence>